<protein>
    <recommendedName>
        <fullName evidence="1">Small ribosomal subunit biogenesis GTPase RsgA</fullName>
        <ecNumber evidence="1">3.6.1.-</ecNumber>
    </recommendedName>
</protein>
<gene>
    <name evidence="1" type="primary">rsgA</name>
    <name type="ordered locus">CGSHiEE_03460</name>
</gene>
<feature type="chain" id="PRO_1000188083" description="Small ribosomal subunit biogenesis GTPase RsgA">
    <location>
        <begin position="1"/>
        <end position="346"/>
    </location>
</feature>
<feature type="domain" description="CP-type G" evidence="2">
    <location>
        <begin position="103"/>
        <end position="271"/>
    </location>
</feature>
<feature type="region of interest" description="Disordered" evidence="3">
    <location>
        <begin position="1"/>
        <end position="26"/>
    </location>
</feature>
<feature type="compositionally biased region" description="Polar residues" evidence="3">
    <location>
        <begin position="7"/>
        <end position="20"/>
    </location>
</feature>
<feature type="binding site" evidence="1">
    <location>
        <begin position="159"/>
        <end position="162"/>
    </location>
    <ligand>
        <name>GTP</name>
        <dbReference type="ChEBI" id="CHEBI:37565"/>
    </ligand>
</feature>
<feature type="binding site" evidence="1">
    <location>
        <begin position="213"/>
        <end position="221"/>
    </location>
    <ligand>
        <name>GTP</name>
        <dbReference type="ChEBI" id="CHEBI:37565"/>
    </ligand>
</feature>
<feature type="binding site" evidence="1">
    <location>
        <position position="295"/>
    </location>
    <ligand>
        <name>Zn(2+)</name>
        <dbReference type="ChEBI" id="CHEBI:29105"/>
    </ligand>
</feature>
<feature type="binding site" evidence="1">
    <location>
        <position position="300"/>
    </location>
    <ligand>
        <name>Zn(2+)</name>
        <dbReference type="ChEBI" id="CHEBI:29105"/>
    </ligand>
</feature>
<feature type="binding site" evidence="1">
    <location>
        <position position="302"/>
    </location>
    <ligand>
        <name>Zn(2+)</name>
        <dbReference type="ChEBI" id="CHEBI:29105"/>
    </ligand>
</feature>
<feature type="binding site" evidence="1">
    <location>
        <position position="308"/>
    </location>
    <ligand>
        <name>Zn(2+)</name>
        <dbReference type="ChEBI" id="CHEBI:29105"/>
    </ligand>
</feature>
<name>RSGA_HAEIE</name>
<comment type="function">
    <text evidence="1">One of several proteins that assist in the late maturation steps of the functional core of the 30S ribosomal subunit. Helps release RbfA from mature subunits. May play a role in the assembly of ribosomal proteins into the subunit. Circularly permuted GTPase that catalyzes slow GTP hydrolysis, GTPase activity is stimulated by the 30S ribosomal subunit.</text>
</comment>
<comment type="cofactor">
    <cofactor evidence="1">
        <name>Zn(2+)</name>
        <dbReference type="ChEBI" id="CHEBI:29105"/>
    </cofactor>
    <text evidence="1">Binds 1 zinc ion per subunit.</text>
</comment>
<comment type="subunit">
    <text evidence="1">Monomer. Associates with 30S ribosomal subunit, binds 16S rRNA.</text>
</comment>
<comment type="subcellular location">
    <subcellularLocation>
        <location evidence="1">Cytoplasm</location>
    </subcellularLocation>
</comment>
<comment type="similarity">
    <text evidence="1">Belongs to the TRAFAC class YlqF/YawG GTPase family. RsgA subfamily.</text>
</comment>
<sequence length="346" mass="38872">MAKRKLTQNQTRRIQSNNAKTLHRHKKKDIEWSDEMLGESQEGVVVTRYSIHADVENEQGEIYRCNLRRTLSSLVVGDKVVWRKGNEQLQGVSGVIEAIHPRENEISRPDYYDGLKPIAANIDRIIIVSAVLPTLSLNIIDRYLVVCEIAGITPLIVLNKVDLLAQEQRQEIEDQLKIYQDIGYEILMISAKSGENMEKLTALLAQGTAIFVGQSGVGKSSLINHILPSVNAQVGDVSETSGLGQHTTTSSRLYHLPQGGNLIDSPGIREFGLWHLDAEQITKGYREFQYVLGTCKFRDCKHLSDPGCALREAVEQGKISPVRYDNYHRLIESLSETKSQRHFSLV</sequence>
<accession>A5UBG2</accession>
<keyword id="KW-0963">Cytoplasm</keyword>
<keyword id="KW-0342">GTP-binding</keyword>
<keyword id="KW-0378">Hydrolase</keyword>
<keyword id="KW-0479">Metal-binding</keyword>
<keyword id="KW-0547">Nucleotide-binding</keyword>
<keyword id="KW-0690">Ribosome biogenesis</keyword>
<keyword id="KW-0694">RNA-binding</keyword>
<keyword id="KW-0699">rRNA-binding</keyword>
<keyword id="KW-0862">Zinc</keyword>
<proteinExistence type="inferred from homology"/>
<evidence type="ECO:0000255" key="1">
    <source>
        <dbReference type="HAMAP-Rule" id="MF_01820"/>
    </source>
</evidence>
<evidence type="ECO:0000255" key="2">
    <source>
        <dbReference type="PROSITE-ProRule" id="PRU01058"/>
    </source>
</evidence>
<evidence type="ECO:0000256" key="3">
    <source>
        <dbReference type="SAM" id="MobiDB-lite"/>
    </source>
</evidence>
<reference key="1">
    <citation type="journal article" date="2007" name="Genome Biol.">
        <title>Characterization and modeling of the Haemophilus influenzae core and supragenomes based on the complete genomic sequences of Rd and 12 clinical nontypeable strains.</title>
        <authorList>
            <person name="Hogg J.S."/>
            <person name="Hu F.Z."/>
            <person name="Janto B."/>
            <person name="Boissy R."/>
            <person name="Hayes J."/>
            <person name="Keefe R."/>
            <person name="Post J.C."/>
            <person name="Ehrlich G.D."/>
        </authorList>
    </citation>
    <scope>NUCLEOTIDE SEQUENCE [LARGE SCALE GENOMIC DNA]</scope>
    <source>
        <strain>PittEE</strain>
    </source>
</reference>
<dbReference type="EC" id="3.6.1.-" evidence="1"/>
<dbReference type="EMBL" id="CP000671">
    <property type="protein sequence ID" value="ABQ98113.1"/>
    <property type="molecule type" value="Genomic_DNA"/>
</dbReference>
<dbReference type="SMR" id="A5UBG2"/>
<dbReference type="KEGG" id="hip:CGSHiEE_03460"/>
<dbReference type="HOGENOM" id="CLU_033617_2_0_6"/>
<dbReference type="GO" id="GO:0005737">
    <property type="term" value="C:cytoplasm"/>
    <property type="evidence" value="ECO:0007669"/>
    <property type="project" value="UniProtKB-SubCell"/>
</dbReference>
<dbReference type="GO" id="GO:0005525">
    <property type="term" value="F:GTP binding"/>
    <property type="evidence" value="ECO:0007669"/>
    <property type="project" value="UniProtKB-UniRule"/>
</dbReference>
<dbReference type="GO" id="GO:0003924">
    <property type="term" value="F:GTPase activity"/>
    <property type="evidence" value="ECO:0007669"/>
    <property type="project" value="UniProtKB-UniRule"/>
</dbReference>
<dbReference type="GO" id="GO:0046872">
    <property type="term" value="F:metal ion binding"/>
    <property type="evidence" value="ECO:0007669"/>
    <property type="project" value="UniProtKB-KW"/>
</dbReference>
<dbReference type="GO" id="GO:0019843">
    <property type="term" value="F:rRNA binding"/>
    <property type="evidence" value="ECO:0007669"/>
    <property type="project" value="UniProtKB-KW"/>
</dbReference>
<dbReference type="GO" id="GO:0042274">
    <property type="term" value="P:ribosomal small subunit biogenesis"/>
    <property type="evidence" value="ECO:0007669"/>
    <property type="project" value="UniProtKB-UniRule"/>
</dbReference>
<dbReference type="CDD" id="cd01854">
    <property type="entry name" value="YjeQ_EngC"/>
    <property type="match status" value="1"/>
</dbReference>
<dbReference type="Gene3D" id="2.40.50.140">
    <property type="entry name" value="Nucleic acid-binding proteins"/>
    <property type="match status" value="1"/>
</dbReference>
<dbReference type="Gene3D" id="3.40.50.300">
    <property type="entry name" value="P-loop containing nucleotide triphosphate hydrolases"/>
    <property type="match status" value="1"/>
</dbReference>
<dbReference type="Gene3D" id="1.10.40.50">
    <property type="entry name" value="Probable gtpase engc, domain 3"/>
    <property type="match status" value="1"/>
</dbReference>
<dbReference type="HAMAP" id="MF_01820">
    <property type="entry name" value="GTPase_RsgA"/>
    <property type="match status" value="1"/>
</dbReference>
<dbReference type="InterPro" id="IPR030378">
    <property type="entry name" value="G_CP_dom"/>
</dbReference>
<dbReference type="InterPro" id="IPR012340">
    <property type="entry name" value="NA-bd_OB-fold"/>
</dbReference>
<dbReference type="InterPro" id="IPR027417">
    <property type="entry name" value="P-loop_NTPase"/>
</dbReference>
<dbReference type="InterPro" id="IPR004881">
    <property type="entry name" value="Ribosome_biogen_GTPase_RsgA"/>
</dbReference>
<dbReference type="InterPro" id="IPR010914">
    <property type="entry name" value="RsgA_GTPase_dom"/>
</dbReference>
<dbReference type="NCBIfam" id="NF008931">
    <property type="entry name" value="PRK12288.1"/>
    <property type="match status" value="1"/>
</dbReference>
<dbReference type="NCBIfam" id="TIGR00157">
    <property type="entry name" value="ribosome small subunit-dependent GTPase A"/>
    <property type="match status" value="1"/>
</dbReference>
<dbReference type="PANTHER" id="PTHR32120">
    <property type="entry name" value="SMALL RIBOSOMAL SUBUNIT BIOGENESIS GTPASE RSGA"/>
    <property type="match status" value="1"/>
</dbReference>
<dbReference type="PANTHER" id="PTHR32120:SF11">
    <property type="entry name" value="SMALL RIBOSOMAL SUBUNIT BIOGENESIS GTPASE RSGA 1, MITOCHONDRIAL-RELATED"/>
    <property type="match status" value="1"/>
</dbReference>
<dbReference type="Pfam" id="PF03193">
    <property type="entry name" value="RsgA_GTPase"/>
    <property type="match status" value="1"/>
</dbReference>
<dbReference type="SUPFAM" id="SSF52540">
    <property type="entry name" value="P-loop containing nucleoside triphosphate hydrolases"/>
    <property type="match status" value="1"/>
</dbReference>
<dbReference type="PROSITE" id="PS50936">
    <property type="entry name" value="ENGC_GTPASE"/>
    <property type="match status" value="1"/>
</dbReference>
<dbReference type="PROSITE" id="PS51721">
    <property type="entry name" value="G_CP"/>
    <property type="match status" value="1"/>
</dbReference>
<organism>
    <name type="scientific">Haemophilus influenzae (strain PittEE)</name>
    <dbReference type="NCBI Taxonomy" id="374930"/>
    <lineage>
        <taxon>Bacteria</taxon>
        <taxon>Pseudomonadati</taxon>
        <taxon>Pseudomonadota</taxon>
        <taxon>Gammaproteobacteria</taxon>
        <taxon>Pasteurellales</taxon>
        <taxon>Pasteurellaceae</taxon>
        <taxon>Haemophilus</taxon>
    </lineage>
</organism>